<keyword id="KW-0963">Cytoplasm</keyword>
<keyword id="KW-0469">Meiosis</keyword>
<keyword id="KW-0472">Membrane</keyword>
<keyword id="KW-0539">Nucleus</keyword>
<keyword id="KW-1185">Reference proteome</keyword>
<keyword id="KW-0677">Repeat</keyword>
<accession>O13992</accession>
<comment type="function">
    <text evidence="1 4">May recruit a lipid transfer protein to the forespore membrane during sporulation, thereby aiding forespore membrane formation (By similarity). Required for meiosis (PubMed:16303567).</text>
</comment>
<comment type="subcellular location">
    <subcellularLocation>
        <location evidence="5">Cytoplasm</location>
    </subcellularLocation>
    <subcellularLocation>
        <location evidence="5">Nucleus</location>
    </subcellularLocation>
    <subcellularLocation>
        <location evidence="1">Prospore membrane</location>
        <topology evidence="6">Peripheral membrane protein</topology>
    </subcellularLocation>
</comment>
<comment type="similarity">
    <text evidence="6">Belongs to the SPO71 family.</text>
</comment>
<proteinExistence type="evidence at protein level"/>
<protein>
    <recommendedName>
        <fullName evidence="6">Forespore membrane adapter protein MUG56</fullName>
    </recommendedName>
    <alternativeName>
        <fullName>Meiotically up-regulated gene 56 protein</fullName>
    </alternativeName>
</protein>
<feature type="chain" id="PRO_0000278501" description="Forespore membrane adapter protein MUG56">
    <location>
        <begin position="1"/>
        <end position="965"/>
    </location>
</feature>
<feature type="domain" description="PH 1" evidence="2">
    <location>
        <begin position="562"/>
        <end position="737"/>
    </location>
</feature>
<feature type="domain" description="PH 2" evidence="2">
    <location>
        <begin position="800"/>
        <end position="961"/>
    </location>
</feature>
<feature type="region of interest" description="Disordered" evidence="3">
    <location>
        <begin position="70"/>
        <end position="175"/>
    </location>
</feature>
<feature type="compositionally biased region" description="Polar residues" evidence="3">
    <location>
        <begin position="82"/>
        <end position="101"/>
    </location>
</feature>
<feature type="compositionally biased region" description="Low complexity" evidence="3">
    <location>
        <begin position="102"/>
        <end position="114"/>
    </location>
</feature>
<feature type="compositionally biased region" description="Polar residues" evidence="3">
    <location>
        <begin position="124"/>
        <end position="158"/>
    </location>
</feature>
<feature type="compositionally biased region" description="Low complexity" evidence="3">
    <location>
        <begin position="159"/>
        <end position="175"/>
    </location>
</feature>
<evidence type="ECO:0000250" key="1">
    <source>
        <dbReference type="UniProtKB" id="Q03868"/>
    </source>
</evidence>
<evidence type="ECO:0000255" key="2">
    <source>
        <dbReference type="PROSITE-ProRule" id="PRU00145"/>
    </source>
</evidence>
<evidence type="ECO:0000256" key="3">
    <source>
        <dbReference type="SAM" id="MobiDB-lite"/>
    </source>
</evidence>
<evidence type="ECO:0000269" key="4">
    <source>
    </source>
</evidence>
<evidence type="ECO:0000269" key="5">
    <source>
    </source>
</evidence>
<evidence type="ECO:0000305" key="6"/>
<evidence type="ECO:0000312" key="7">
    <source>
        <dbReference type="PomBase" id="SPAC26H5.11"/>
    </source>
</evidence>
<dbReference type="EMBL" id="CU329670">
    <property type="protein sequence ID" value="CAB16196.1"/>
    <property type="molecule type" value="Genomic_DNA"/>
</dbReference>
<dbReference type="PIR" id="T38430">
    <property type="entry name" value="T38430"/>
</dbReference>
<dbReference type="RefSeq" id="NP_594458.1">
    <property type="nucleotide sequence ID" value="NM_001019887.2"/>
</dbReference>
<dbReference type="STRING" id="284812.O13992"/>
<dbReference type="iPTMnet" id="O13992"/>
<dbReference type="PaxDb" id="4896-SPAC26H5.11.1"/>
<dbReference type="EnsemblFungi" id="SPAC26H5.11.1">
    <property type="protein sequence ID" value="SPAC26H5.11.1:pep"/>
    <property type="gene ID" value="SPAC26H5.11"/>
</dbReference>
<dbReference type="GeneID" id="2542692"/>
<dbReference type="KEGG" id="spo:2542692"/>
<dbReference type="PomBase" id="SPAC26H5.11">
    <property type="gene designation" value="mug56"/>
</dbReference>
<dbReference type="VEuPathDB" id="FungiDB:SPAC26H5.11"/>
<dbReference type="eggNOG" id="ENOG502QRAT">
    <property type="taxonomic scope" value="Eukaryota"/>
</dbReference>
<dbReference type="HOGENOM" id="CLU_003938_0_0_1"/>
<dbReference type="InParanoid" id="O13992"/>
<dbReference type="OMA" id="DRWVMSI"/>
<dbReference type="PhylomeDB" id="O13992"/>
<dbReference type="PRO" id="PR:O13992"/>
<dbReference type="Proteomes" id="UP000002485">
    <property type="component" value="Chromosome I"/>
</dbReference>
<dbReference type="GO" id="GO:0005829">
    <property type="term" value="C:cytosol"/>
    <property type="evidence" value="ECO:0007005"/>
    <property type="project" value="PomBase"/>
</dbReference>
<dbReference type="GO" id="GO:0005634">
    <property type="term" value="C:nucleus"/>
    <property type="evidence" value="ECO:0007005"/>
    <property type="project" value="PomBase"/>
</dbReference>
<dbReference type="GO" id="GO:0005628">
    <property type="term" value="C:prospore membrane"/>
    <property type="evidence" value="ECO:0000318"/>
    <property type="project" value="GO_Central"/>
</dbReference>
<dbReference type="GO" id="GO:0008289">
    <property type="term" value="F:lipid binding"/>
    <property type="evidence" value="ECO:0000255"/>
    <property type="project" value="PomBase"/>
</dbReference>
<dbReference type="GO" id="GO:0032120">
    <property type="term" value="P:ascospore-type prospore membrane formation"/>
    <property type="evidence" value="ECO:0000266"/>
    <property type="project" value="PomBase"/>
</dbReference>
<dbReference type="GO" id="GO:1902657">
    <property type="term" value="P:protein localization to prospore membrane"/>
    <property type="evidence" value="ECO:0000318"/>
    <property type="project" value="GO_Central"/>
</dbReference>
<dbReference type="CDD" id="cd00821">
    <property type="entry name" value="PH"/>
    <property type="match status" value="1"/>
</dbReference>
<dbReference type="InterPro" id="IPR040345">
    <property type="entry name" value="Mug56/Spo71"/>
</dbReference>
<dbReference type="InterPro" id="IPR039486">
    <property type="entry name" value="Mug56/Spo71_PH"/>
</dbReference>
<dbReference type="InterPro" id="IPR001849">
    <property type="entry name" value="PH_domain"/>
</dbReference>
<dbReference type="PANTHER" id="PTHR28076:SF1">
    <property type="entry name" value="PROSPORE MEMBRANE ADAPTER PROTEIN SPO71"/>
    <property type="match status" value="1"/>
</dbReference>
<dbReference type="PANTHER" id="PTHR28076">
    <property type="entry name" value="SPORULATION-SPECIFIC PROTEIN 71"/>
    <property type="match status" value="1"/>
</dbReference>
<dbReference type="Pfam" id="PF15404">
    <property type="entry name" value="PH_4"/>
    <property type="match status" value="1"/>
</dbReference>
<dbReference type="Pfam" id="PF23207">
    <property type="entry name" value="PH_SPO71"/>
    <property type="match status" value="1"/>
</dbReference>
<dbReference type="SMART" id="SM00233">
    <property type="entry name" value="PH"/>
    <property type="match status" value="2"/>
</dbReference>
<dbReference type="SUPFAM" id="SSF50729">
    <property type="entry name" value="PH domain-like"/>
    <property type="match status" value="2"/>
</dbReference>
<dbReference type="PROSITE" id="PS50003">
    <property type="entry name" value="PH_DOMAIN"/>
    <property type="match status" value="2"/>
</dbReference>
<gene>
    <name evidence="7" type="primary">mug56</name>
    <name evidence="7" type="ORF">SPAC26H5.11</name>
</gene>
<organism>
    <name type="scientific">Schizosaccharomyces pombe (strain 972 / ATCC 24843)</name>
    <name type="common">Fission yeast</name>
    <dbReference type="NCBI Taxonomy" id="284812"/>
    <lineage>
        <taxon>Eukaryota</taxon>
        <taxon>Fungi</taxon>
        <taxon>Dikarya</taxon>
        <taxon>Ascomycota</taxon>
        <taxon>Taphrinomycotina</taxon>
        <taxon>Schizosaccharomycetes</taxon>
        <taxon>Schizosaccharomycetales</taxon>
        <taxon>Schizosaccharomycetaceae</taxon>
        <taxon>Schizosaccharomyces</taxon>
    </lineage>
</organism>
<reference key="1">
    <citation type="journal article" date="2002" name="Nature">
        <title>The genome sequence of Schizosaccharomyces pombe.</title>
        <authorList>
            <person name="Wood V."/>
            <person name="Gwilliam R."/>
            <person name="Rajandream M.A."/>
            <person name="Lyne M.H."/>
            <person name="Lyne R."/>
            <person name="Stewart A."/>
            <person name="Sgouros J.G."/>
            <person name="Peat N."/>
            <person name="Hayles J."/>
            <person name="Baker S.G."/>
            <person name="Basham D."/>
            <person name="Bowman S."/>
            <person name="Brooks K."/>
            <person name="Brown D."/>
            <person name="Brown S."/>
            <person name="Chillingworth T."/>
            <person name="Churcher C.M."/>
            <person name="Collins M."/>
            <person name="Connor R."/>
            <person name="Cronin A."/>
            <person name="Davis P."/>
            <person name="Feltwell T."/>
            <person name="Fraser A."/>
            <person name="Gentles S."/>
            <person name="Goble A."/>
            <person name="Hamlin N."/>
            <person name="Harris D.E."/>
            <person name="Hidalgo J."/>
            <person name="Hodgson G."/>
            <person name="Holroyd S."/>
            <person name="Hornsby T."/>
            <person name="Howarth S."/>
            <person name="Huckle E.J."/>
            <person name="Hunt S."/>
            <person name="Jagels K."/>
            <person name="James K.D."/>
            <person name="Jones L."/>
            <person name="Jones M."/>
            <person name="Leather S."/>
            <person name="McDonald S."/>
            <person name="McLean J."/>
            <person name="Mooney P."/>
            <person name="Moule S."/>
            <person name="Mungall K.L."/>
            <person name="Murphy L.D."/>
            <person name="Niblett D."/>
            <person name="Odell C."/>
            <person name="Oliver K."/>
            <person name="O'Neil S."/>
            <person name="Pearson D."/>
            <person name="Quail M.A."/>
            <person name="Rabbinowitsch E."/>
            <person name="Rutherford K.M."/>
            <person name="Rutter S."/>
            <person name="Saunders D."/>
            <person name="Seeger K."/>
            <person name="Sharp S."/>
            <person name="Skelton J."/>
            <person name="Simmonds M.N."/>
            <person name="Squares R."/>
            <person name="Squares S."/>
            <person name="Stevens K."/>
            <person name="Taylor K."/>
            <person name="Taylor R.G."/>
            <person name="Tivey A."/>
            <person name="Walsh S.V."/>
            <person name="Warren T."/>
            <person name="Whitehead S."/>
            <person name="Woodward J.R."/>
            <person name="Volckaert G."/>
            <person name="Aert R."/>
            <person name="Robben J."/>
            <person name="Grymonprez B."/>
            <person name="Weltjens I."/>
            <person name="Vanstreels E."/>
            <person name="Rieger M."/>
            <person name="Schaefer M."/>
            <person name="Mueller-Auer S."/>
            <person name="Gabel C."/>
            <person name="Fuchs M."/>
            <person name="Duesterhoeft A."/>
            <person name="Fritzc C."/>
            <person name="Holzer E."/>
            <person name="Moestl D."/>
            <person name="Hilbert H."/>
            <person name="Borzym K."/>
            <person name="Langer I."/>
            <person name="Beck A."/>
            <person name="Lehrach H."/>
            <person name="Reinhardt R."/>
            <person name="Pohl T.M."/>
            <person name="Eger P."/>
            <person name="Zimmermann W."/>
            <person name="Wedler H."/>
            <person name="Wambutt R."/>
            <person name="Purnelle B."/>
            <person name="Goffeau A."/>
            <person name="Cadieu E."/>
            <person name="Dreano S."/>
            <person name="Gloux S."/>
            <person name="Lelaure V."/>
            <person name="Mottier S."/>
            <person name="Galibert F."/>
            <person name="Aves S.J."/>
            <person name="Xiang Z."/>
            <person name="Hunt C."/>
            <person name="Moore K."/>
            <person name="Hurst S.M."/>
            <person name="Lucas M."/>
            <person name="Rochet M."/>
            <person name="Gaillardin C."/>
            <person name="Tallada V.A."/>
            <person name="Garzon A."/>
            <person name="Thode G."/>
            <person name="Daga R.R."/>
            <person name="Cruzado L."/>
            <person name="Jimenez J."/>
            <person name="Sanchez M."/>
            <person name="del Rey F."/>
            <person name="Benito J."/>
            <person name="Dominguez A."/>
            <person name="Revuelta J.L."/>
            <person name="Moreno S."/>
            <person name="Armstrong J."/>
            <person name="Forsburg S.L."/>
            <person name="Cerutti L."/>
            <person name="Lowe T."/>
            <person name="McCombie W.R."/>
            <person name="Paulsen I."/>
            <person name="Potashkin J."/>
            <person name="Shpakovski G.V."/>
            <person name="Ussery D."/>
            <person name="Barrell B.G."/>
            <person name="Nurse P."/>
        </authorList>
    </citation>
    <scope>NUCLEOTIDE SEQUENCE [LARGE SCALE GENOMIC DNA]</scope>
    <source>
        <strain>972 / ATCC 24843</strain>
    </source>
</reference>
<reference key="2">
    <citation type="journal article" date="2005" name="Curr. Biol.">
        <title>A large-scale screen in S. pombe identifies seven novel genes required for critical meiotic events.</title>
        <authorList>
            <person name="Martin-Castellanos C."/>
            <person name="Blanco M."/>
            <person name="Rozalen A.E."/>
            <person name="Perez-Hidalgo L."/>
            <person name="Garcia A.I."/>
            <person name="Conde F."/>
            <person name="Mata J."/>
            <person name="Ellermeier C."/>
            <person name="Davis L."/>
            <person name="San-Segundo P."/>
            <person name="Smith G.R."/>
            <person name="Moreno S."/>
        </authorList>
    </citation>
    <scope>FUNCTION IN MEIOSIS</scope>
</reference>
<reference key="3">
    <citation type="journal article" date="2006" name="Nat. Biotechnol.">
        <title>ORFeome cloning and global analysis of protein localization in the fission yeast Schizosaccharomyces pombe.</title>
        <authorList>
            <person name="Matsuyama A."/>
            <person name="Arai R."/>
            <person name="Yashiroda Y."/>
            <person name="Shirai A."/>
            <person name="Kamata A."/>
            <person name="Sekido S."/>
            <person name="Kobayashi Y."/>
            <person name="Hashimoto A."/>
            <person name="Hamamoto M."/>
            <person name="Hiraoka Y."/>
            <person name="Horinouchi S."/>
            <person name="Yoshida M."/>
        </authorList>
    </citation>
    <scope>SUBCELLULAR LOCATION [LARGE SCALE ANALYSIS]</scope>
</reference>
<sequence length="965" mass="110905">MNEEDTDFAWLHNNSAEHLRFLSHRIFIGPIPSNFIHSTSGFFNKRFQNYTKRQICYNVASPNEPPIDFSFLMHKSTDENPDTPSNLDSPSTQNVGSTNNTRASQSLLRRSSSFFRRRHRKNGTHASTDNNPFSESSTLQPQTAERTSQQAVRSAITETTNPSVSVQNSNSTSTSSAAMIIPHRDSQNSLEIAPLISPESQLSSLHPSSSRRHLISTPHVNRGTQFKRSSSCRNSRQPLLSGVDKHLTSNFTDANLIIKQSVVLARIESTFTVLPSDYNDSAAQRVPRKTISPWSQCLLVARQTDVENSIRLDFISKKLRKRLNGDVVHNLDVPHDKSYKSNYLFSVVLSPHQASWNIYNSFDNSMVLWCPYGKNKTLICLLNFQSSLLSFEWISIISRALLFSPRPSLLISVPAFHIHLRLNFPCFKDTTRPHTNETFVTTDDITQLSRTSTLSLSTASPRLVHDLVMKSWDISEDQFVESCLGVLEVNPEWSGIVKTWSKSHTLGLCWRMYDRLEWINSFSSLKYVGLLAAKDLYQLELRPKLHYPNHVTFRDGSKMDEPTPVEGYLIRLTSSTGRKTRYGRMFHKELYFAIFNNFLFAIQPDSVLPLSMLSKSLNLDDKLPFLSNNENDKYVYEFDPFKIANCRASGLNETIDSSVRESFLLLLQAERKRELDMLTIADSFLDLSRVESVCPVEDVEERNIFEITMTNGMKLVFQSYCERTRNLWINKITEVASYWKQRLFLDLQEYHDVRETNINILHIEQSIEPDVACYLNHWEVAGCVASTLIYHYCSMLGCRVIRMQGTLFKKKDALFEKCFAILIPGQLVFFQDATRTKFGKLCTKTHYRKRYSISLKNAFIYTGLSTMDEFARGPNDPQPHISRLPRCYEDGWQSFDRDDMLSFVIWSSGGVDYDLRPHHSVPDTAYGMAKDKLSKPKRFMFLARTRQERDVWAKRISKEINRGHS</sequence>
<name>SPO71_SCHPO</name>